<accession>B1KV16</accession>
<dbReference type="EC" id="6.3.2.4" evidence="2"/>
<dbReference type="EMBL" id="CP000962">
    <property type="protein sequence ID" value="ACA56780.1"/>
    <property type="molecule type" value="Genomic_DNA"/>
</dbReference>
<dbReference type="RefSeq" id="WP_012344602.1">
    <property type="nucleotide sequence ID" value="NC_010520.1"/>
</dbReference>
<dbReference type="SMR" id="B1KV16"/>
<dbReference type="KEGG" id="cbl:CLK_3656"/>
<dbReference type="HOGENOM" id="CLU_039268_1_1_9"/>
<dbReference type="UniPathway" id="UPA00219"/>
<dbReference type="GO" id="GO:0005737">
    <property type="term" value="C:cytoplasm"/>
    <property type="evidence" value="ECO:0007669"/>
    <property type="project" value="UniProtKB-SubCell"/>
</dbReference>
<dbReference type="GO" id="GO:0005524">
    <property type="term" value="F:ATP binding"/>
    <property type="evidence" value="ECO:0007669"/>
    <property type="project" value="UniProtKB-KW"/>
</dbReference>
<dbReference type="GO" id="GO:0008716">
    <property type="term" value="F:D-alanine-D-alanine ligase activity"/>
    <property type="evidence" value="ECO:0007669"/>
    <property type="project" value="UniProtKB-UniRule"/>
</dbReference>
<dbReference type="GO" id="GO:0046872">
    <property type="term" value="F:metal ion binding"/>
    <property type="evidence" value="ECO:0007669"/>
    <property type="project" value="UniProtKB-KW"/>
</dbReference>
<dbReference type="GO" id="GO:0071555">
    <property type="term" value="P:cell wall organization"/>
    <property type="evidence" value="ECO:0007669"/>
    <property type="project" value="UniProtKB-KW"/>
</dbReference>
<dbReference type="GO" id="GO:0009252">
    <property type="term" value="P:peptidoglycan biosynthetic process"/>
    <property type="evidence" value="ECO:0007669"/>
    <property type="project" value="UniProtKB-UniRule"/>
</dbReference>
<dbReference type="GO" id="GO:0008360">
    <property type="term" value="P:regulation of cell shape"/>
    <property type="evidence" value="ECO:0007669"/>
    <property type="project" value="UniProtKB-KW"/>
</dbReference>
<dbReference type="FunFam" id="3.30.470.20:FF:000074">
    <property type="entry name" value="D-alanine--D-alanine ligase"/>
    <property type="match status" value="1"/>
</dbReference>
<dbReference type="FunFam" id="3.40.50.20:FF:000031">
    <property type="entry name" value="D-alanine--D-alanine ligase"/>
    <property type="match status" value="1"/>
</dbReference>
<dbReference type="Gene3D" id="3.40.50.20">
    <property type="match status" value="1"/>
</dbReference>
<dbReference type="Gene3D" id="3.30.1490.20">
    <property type="entry name" value="ATP-grasp fold, A domain"/>
    <property type="match status" value="1"/>
</dbReference>
<dbReference type="Gene3D" id="3.30.470.20">
    <property type="entry name" value="ATP-grasp fold, B domain"/>
    <property type="match status" value="1"/>
</dbReference>
<dbReference type="HAMAP" id="MF_00047">
    <property type="entry name" value="Dala_Dala_lig"/>
    <property type="match status" value="1"/>
</dbReference>
<dbReference type="InterPro" id="IPR011761">
    <property type="entry name" value="ATP-grasp"/>
</dbReference>
<dbReference type="InterPro" id="IPR013815">
    <property type="entry name" value="ATP_grasp_subdomain_1"/>
</dbReference>
<dbReference type="InterPro" id="IPR000291">
    <property type="entry name" value="D-Ala_lig_Van_CS"/>
</dbReference>
<dbReference type="InterPro" id="IPR005905">
    <property type="entry name" value="D_ala_D_ala"/>
</dbReference>
<dbReference type="InterPro" id="IPR011095">
    <property type="entry name" value="Dala_Dala_lig_C"/>
</dbReference>
<dbReference type="InterPro" id="IPR011127">
    <property type="entry name" value="Dala_Dala_lig_N"/>
</dbReference>
<dbReference type="InterPro" id="IPR016185">
    <property type="entry name" value="PreATP-grasp_dom_sf"/>
</dbReference>
<dbReference type="NCBIfam" id="TIGR01205">
    <property type="entry name" value="D_ala_D_alaTIGR"/>
    <property type="match status" value="1"/>
</dbReference>
<dbReference type="NCBIfam" id="NF002378">
    <property type="entry name" value="PRK01372.1"/>
    <property type="match status" value="1"/>
</dbReference>
<dbReference type="PANTHER" id="PTHR23132">
    <property type="entry name" value="D-ALANINE--D-ALANINE LIGASE"/>
    <property type="match status" value="1"/>
</dbReference>
<dbReference type="PANTHER" id="PTHR23132:SF23">
    <property type="entry name" value="D-ALANINE--D-ALANINE LIGASE B"/>
    <property type="match status" value="1"/>
</dbReference>
<dbReference type="Pfam" id="PF07478">
    <property type="entry name" value="Dala_Dala_lig_C"/>
    <property type="match status" value="1"/>
</dbReference>
<dbReference type="Pfam" id="PF01820">
    <property type="entry name" value="Dala_Dala_lig_N"/>
    <property type="match status" value="1"/>
</dbReference>
<dbReference type="PIRSF" id="PIRSF039102">
    <property type="entry name" value="Ddl/VanB"/>
    <property type="match status" value="1"/>
</dbReference>
<dbReference type="SMART" id="SM01209">
    <property type="entry name" value="GARS_A"/>
    <property type="match status" value="1"/>
</dbReference>
<dbReference type="SUPFAM" id="SSF56059">
    <property type="entry name" value="Glutathione synthetase ATP-binding domain-like"/>
    <property type="match status" value="1"/>
</dbReference>
<dbReference type="SUPFAM" id="SSF52440">
    <property type="entry name" value="PreATP-grasp domain"/>
    <property type="match status" value="1"/>
</dbReference>
<dbReference type="PROSITE" id="PS50975">
    <property type="entry name" value="ATP_GRASP"/>
    <property type="match status" value="1"/>
</dbReference>
<dbReference type="PROSITE" id="PS00843">
    <property type="entry name" value="DALA_DALA_LIGASE_1"/>
    <property type="match status" value="1"/>
</dbReference>
<dbReference type="PROSITE" id="PS00844">
    <property type="entry name" value="DALA_DALA_LIGASE_2"/>
    <property type="match status" value="1"/>
</dbReference>
<keyword id="KW-0067">ATP-binding</keyword>
<keyword id="KW-0133">Cell shape</keyword>
<keyword id="KW-0961">Cell wall biogenesis/degradation</keyword>
<keyword id="KW-0963">Cytoplasm</keyword>
<keyword id="KW-0436">Ligase</keyword>
<keyword id="KW-0460">Magnesium</keyword>
<keyword id="KW-0464">Manganese</keyword>
<keyword id="KW-0479">Metal-binding</keyword>
<keyword id="KW-0547">Nucleotide-binding</keyword>
<keyword id="KW-0573">Peptidoglycan synthesis</keyword>
<proteinExistence type="inferred from homology"/>
<comment type="function">
    <text evidence="2">Cell wall formation.</text>
</comment>
<comment type="catalytic activity">
    <reaction evidence="2">
        <text>2 D-alanine + ATP = D-alanyl-D-alanine + ADP + phosphate + H(+)</text>
        <dbReference type="Rhea" id="RHEA:11224"/>
        <dbReference type="ChEBI" id="CHEBI:15378"/>
        <dbReference type="ChEBI" id="CHEBI:30616"/>
        <dbReference type="ChEBI" id="CHEBI:43474"/>
        <dbReference type="ChEBI" id="CHEBI:57416"/>
        <dbReference type="ChEBI" id="CHEBI:57822"/>
        <dbReference type="ChEBI" id="CHEBI:456216"/>
        <dbReference type="EC" id="6.3.2.4"/>
    </reaction>
</comment>
<comment type="cofactor">
    <cofactor evidence="1">
        <name>Mg(2+)</name>
        <dbReference type="ChEBI" id="CHEBI:18420"/>
    </cofactor>
    <cofactor evidence="1">
        <name>Mn(2+)</name>
        <dbReference type="ChEBI" id="CHEBI:29035"/>
    </cofactor>
    <text evidence="1">Binds 2 magnesium or manganese ions per subunit.</text>
</comment>
<comment type="pathway">
    <text evidence="2">Cell wall biogenesis; peptidoglycan biosynthesis.</text>
</comment>
<comment type="subcellular location">
    <subcellularLocation>
        <location evidence="2">Cytoplasm</location>
    </subcellularLocation>
</comment>
<comment type="similarity">
    <text evidence="2">Belongs to the D-alanine--D-alanine ligase family.</text>
</comment>
<protein>
    <recommendedName>
        <fullName evidence="2">D-alanine--D-alanine ligase</fullName>
        <ecNumber evidence="2">6.3.2.4</ecNumber>
    </recommendedName>
    <alternativeName>
        <fullName evidence="2">D-Ala-D-Ala ligase</fullName>
    </alternativeName>
    <alternativeName>
        <fullName evidence="2">D-alanylalanine synthetase</fullName>
    </alternativeName>
</protein>
<evidence type="ECO:0000250" key="1"/>
<evidence type="ECO:0000255" key="2">
    <source>
        <dbReference type="HAMAP-Rule" id="MF_00047"/>
    </source>
</evidence>
<sequence length="300" mass="33362">MKIGVIMGGISTEREVSLNSGREVIKYLELLEHEIIPIIIDKKEDVMEKAKGIDFAFLALHGKFGEDGTVQSVLQTLDIPYSGCGPLTSAICMDKDMTKKILKYANINTADWVNVTNAEDIDYEAIEKIGYPVFVKPNSGGSSVATNLVKNKEGIKEAVELALKYDKEVMIENYTKGEEITCCMLNGKMLPVLAIRPHAEFFDYTAKYADGGSDEVVIELEENLHKKVEEMALACWKELKCEVYVRVDMIVKEGVPYVLELNTLPGMTKNSLFPKSANAVGISFAELLNSIVKYSLEVER</sequence>
<name>DDL_CLOBM</name>
<gene>
    <name evidence="2" type="primary">ddl</name>
    <name type="ordered locus">CLK_3656</name>
</gene>
<feature type="chain" id="PRO_1000091176" description="D-alanine--D-alanine ligase">
    <location>
        <begin position="1"/>
        <end position="300"/>
    </location>
</feature>
<feature type="domain" description="ATP-grasp" evidence="2">
    <location>
        <begin position="99"/>
        <end position="293"/>
    </location>
</feature>
<feature type="binding site" evidence="2">
    <location>
        <begin position="126"/>
        <end position="181"/>
    </location>
    <ligand>
        <name>ATP</name>
        <dbReference type="ChEBI" id="CHEBI:30616"/>
    </ligand>
</feature>
<feature type="binding site" evidence="2">
    <location>
        <position position="248"/>
    </location>
    <ligand>
        <name>Mg(2+)</name>
        <dbReference type="ChEBI" id="CHEBI:18420"/>
        <label>1</label>
    </ligand>
</feature>
<feature type="binding site" evidence="2">
    <location>
        <position position="260"/>
    </location>
    <ligand>
        <name>Mg(2+)</name>
        <dbReference type="ChEBI" id="CHEBI:18420"/>
        <label>1</label>
    </ligand>
</feature>
<feature type="binding site" evidence="2">
    <location>
        <position position="260"/>
    </location>
    <ligand>
        <name>Mg(2+)</name>
        <dbReference type="ChEBI" id="CHEBI:18420"/>
        <label>2</label>
    </ligand>
</feature>
<feature type="binding site" evidence="2">
    <location>
        <position position="262"/>
    </location>
    <ligand>
        <name>Mg(2+)</name>
        <dbReference type="ChEBI" id="CHEBI:18420"/>
        <label>2</label>
    </ligand>
</feature>
<organism>
    <name type="scientific">Clostridium botulinum (strain Loch Maree / Type A3)</name>
    <dbReference type="NCBI Taxonomy" id="498214"/>
    <lineage>
        <taxon>Bacteria</taxon>
        <taxon>Bacillati</taxon>
        <taxon>Bacillota</taxon>
        <taxon>Clostridia</taxon>
        <taxon>Eubacteriales</taxon>
        <taxon>Clostridiaceae</taxon>
        <taxon>Clostridium</taxon>
    </lineage>
</organism>
<reference key="1">
    <citation type="journal article" date="2007" name="PLoS ONE">
        <title>Analysis of the neurotoxin complex genes in Clostridium botulinum A1-A4 and B1 strains: BoNT/A3, /Ba4 and /B1 clusters are located within plasmids.</title>
        <authorList>
            <person name="Smith T.J."/>
            <person name="Hill K.K."/>
            <person name="Foley B.T."/>
            <person name="Detter J.C."/>
            <person name="Munk A.C."/>
            <person name="Bruce D.C."/>
            <person name="Doggett N.A."/>
            <person name="Smith L.A."/>
            <person name="Marks J.D."/>
            <person name="Xie G."/>
            <person name="Brettin T.S."/>
        </authorList>
    </citation>
    <scope>NUCLEOTIDE SEQUENCE [LARGE SCALE GENOMIC DNA]</scope>
    <source>
        <strain>Loch Maree / Type A3</strain>
    </source>
</reference>